<dbReference type="EC" id="2.3.2.23"/>
<dbReference type="EMBL" id="M74077">
    <property type="status" value="NOT_ANNOTATED_CDS"/>
    <property type="molecule type" value="mRNA"/>
</dbReference>
<dbReference type="PIR" id="A41547">
    <property type="entry name" value="A41547"/>
</dbReference>
<dbReference type="SMR" id="P25868"/>
<dbReference type="STRING" id="4565.P25868"/>
<dbReference type="PaxDb" id="4565-Traes_3B_6707B51E1.1"/>
<dbReference type="eggNOG" id="KOG0425">
    <property type="taxonomic scope" value="Eukaryota"/>
</dbReference>
<dbReference type="UniPathway" id="UPA00143"/>
<dbReference type="Proteomes" id="UP000019116">
    <property type="component" value="Unplaced"/>
</dbReference>
<dbReference type="ExpressionAtlas" id="P25868">
    <property type="expression patterns" value="baseline"/>
</dbReference>
<dbReference type="GO" id="GO:0005524">
    <property type="term" value="F:ATP binding"/>
    <property type="evidence" value="ECO:0007669"/>
    <property type="project" value="UniProtKB-KW"/>
</dbReference>
<dbReference type="GO" id="GO:0061631">
    <property type="term" value="F:ubiquitin conjugating enzyme activity"/>
    <property type="evidence" value="ECO:0000318"/>
    <property type="project" value="GO_Central"/>
</dbReference>
<dbReference type="GO" id="GO:0000209">
    <property type="term" value="P:protein polyubiquitination"/>
    <property type="evidence" value="ECO:0000318"/>
    <property type="project" value="GO_Central"/>
</dbReference>
<dbReference type="GO" id="GO:0006511">
    <property type="term" value="P:ubiquitin-dependent protein catabolic process"/>
    <property type="evidence" value="ECO:0000318"/>
    <property type="project" value="GO_Central"/>
</dbReference>
<dbReference type="CDD" id="cd23795">
    <property type="entry name" value="UBCc_UBE2G1"/>
    <property type="match status" value="1"/>
</dbReference>
<dbReference type="FunFam" id="3.10.110.10:FF:000025">
    <property type="entry name" value="ubiquitin-conjugating enzyme E2 7"/>
    <property type="match status" value="1"/>
</dbReference>
<dbReference type="Gene3D" id="3.10.110.10">
    <property type="entry name" value="Ubiquitin Conjugating Enzyme"/>
    <property type="match status" value="1"/>
</dbReference>
<dbReference type="InterPro" id="IPR050113">
    <property type="entry name" value="Ub_conjugating_enzyme"/>
</dbReference>
<dbReference type="InterPro" id="IPR000608">
    <property type="entry name" value="UBQ-conjugat_E2_core"/>
</dbReference>
<dbReference type="InterPro" id="IPR023313">
    <property type="entry name" value="UBQ-conjugating_AS"/>
</dbReference>
<dbReference type="InterPro" id="IPR016135">
    <property type="entry name" value="UBQ-conjugating_enzyme/RWD"/>
</dbReference>
<dbReference type="PANTHER" id="PTHR24067">
    <property type="entry name" value="UBIQUITIN-CONJUGATING ENZYME E2"/>
    <property type="match status" value="1"/>
</dbReference>
<dbReference type="Pfam" id="PF00179">
    <property type="entry name" value="UQ_con"/>
    <property type="match status" value="1"/>
</dbReference>
<dbReference type="SMART" id="SM00212">
    <property type="entry name" value="UBCc"/>
    <property type="match status" value="1"/>
</dbReference>
<dbReference type="SUPFAM" id="SSF54495">
    <property type="entry name" value="UBC-like"/>
    <property type="match status" value="1"/>
</dbReference>
<dbReference type="PROSITE" id="PS00183">
    <property type="entry name" value="UBC_1"/>
    <property type="match status" value="1"/>
</dbReference>
<dbReference type="PROSITE" id="PS50127">
    <property type="entry name" value="UBC_2"/>
    <property type="match status" value="1"/>
</dbReference>
<proteinExistence type="evidence at transcript level"/>
<gene>
    <name type="primary">UBC7</name>
</gene>
<keyword id="KW-0067">ATP-binding</keyword>
<keyword id="KW-0547">Nucleotide-binding</keyword>
<keyword id="KW-1185">Reference proteome</keyword>
<keyword id="KW-0808">Transferase</keyword>
<keyword id="KW-0833">Ubl conjugation pathway</keyword>
<organism>
    <name type="scientific">Triticum aestivum</name>
    <name type="common">Wheat</name>
    <dbReference type="NCBI Taxonomy" id="4565"/>
    <lineage>
        <taxon>Eukaryota</taxon>
        <taxon>Viridiplantae</taxon>
        <taxon>Streptophyta</taxon>
        <taxon>Embryophyta</taxon>
        <taxon>Tracheophyta</taxon>
        <taxon>Spermatophyta</taxon>
        <taxon>Magnoliopsida</taxon>
        <taxon>Liliopsida</taxon>
        <taxon>Poales</taxon>
        <taxon>Poaceae</taxon>
        <taxon>BOP clade</taxon>
        <taxon>Pooideae</taxon>
        <taxon>Triticodae</taxon>
        <taxon>Triticeae</taxon>
        <taxon>Triticinae</taxon>
        <taxon>Triticum</taxon>
    </lineage>
</organism>
<feature type="chain" id="PRO_0000082585" description="Ubiquitin-conjugating enzyme E2 7">
    <location>
        <begin position="1"/>
        <end position="168"/>
    </location>
</feature>
<feature type="domain" description="UBC core" evidence="1">
    <location>
        <begin position="6"/>
        <end position="166"/>
    </location>
</feature>
<feature type="region of interest" description="Disordered" evidence="3">
    <location>
        <begin position="1"/>
        <end position="21"/>
    </location>
</feature>
<feature type="active site" description="Glycyl thioester intermediate" evidence="1 2">
    <location>
        <position position="92"/>
    </location>
</feature>
<name>UBC7_WHEAT</name>
<sequence length="168" mass="18897">MATAPARRASSSRSSSEISRTTPSMGFQLGFVDDSNVFEWQVTIIGPPETLYDGGYFNAIMSFPQNYPNSPPTVRFTSEMWHPNVYPDGRVCISIHPPGDDPNGYELASERWTPVHTVESIVLSIISMLSSPNDESPANIEAAKDWREKQDEFKKKVRRAVRKSQEML</sequence>
<evidence type="ECO:0000255" key="1">
    <source>
        <dbReference type="PROSITE-ProRule" id="PRU00388"/>
    </source>
</evidence>
<evidence type="ECO:0000255" key="2">
    <source>
        <dbReference type="PROSITE-ProRule" id="PRU10133"/>
    </source>
</evidence>
<evidence type="ECO:0000256" key="3">
    <source>
        <dbReference type="SAM" id="MobiDB-lite"/>
    </source>
</evidence>
<evidence type="ECO:0000269" key="4">
    <source>
    </source>
</evidence>
<reference key="1">
    <citation type="journal article" date="1991" name="Proc. Natl. Acad. Sci. U.S.A.">
        <title>Cloning and characterization of a 20-kDa ubiquitin carrier protein from wheat that catalyzes multiubiquitin chain formation in vitro.</title>
        <authorList>
            <person name="van Nocker S."/>
            <person name="Vierstra R.D."/>
        </authorList>
    </citation>
    <scope>NUCLEOTIDE SEQUENCE [MRNA]</scope>
    <scope>FUNCTION</scope>
    <source>
        <strain>cv. Augusta</strain>
    </source>
</reference>
<comment type="function">
    <text evidence="1 4">Catalyzes the covalent attachment of ubiquitin to other proteins so as to signal them for selective protein degradation. Involved in the formation of multiubiquitin chains.</text>
</comment>
<comment type="catalytic activity">
    <reaction evidence="1 2">
        <text>S-ubiquitinyl-[E1 ubiquitin-activating enzyme]-L-cysteine + [E2 ubiquitin-conjugating enzyme]-L-cysteine = [E1 ubiquitin-activating enzyme]-L-cysteine + S-ubiquitinyl-[E2 ubiquitin-conjugating enzyme]-L-cysteine.</text>
        <dbReference type="EC" id="2.3.2.23"/>
    </reaction>
</comment>
<comment type="pathway">
    <text evidence="1">Protein modification; protein ubiquitination.</text>
</comment>
<comment type="similarity">
    <text evidence="1">Belongs to the ubiquitin-conjugating enzyme family.</text>
</comment>
<protein>
    <recommendedName>
        <fullName>Ubiquitin-conjugating enzyme E2 7</fullName>
        <ecNumber>2.3.2.23</ecNumber>
    </recommendedName>
    <alternativeName>
        <fullName>E2 ubiquitin-conjugating enzyme 7</fullName>
    </alternativeName>
    <alternativeName>
        <fullName>Ubiquitin carrier protein 7</fullName>
    </alternativeName>
    <alternativeName>
        <fullName>Ubiquitin-protein ligase 7</fullName>
    </alternativeName>
</protein>
<accession>P25868</accession>